<accession>Q8LQ74</accession>
<accession>A0A0P0V810</accession>
<accession>Q0JJF6</accession>
<protein>
    <recommendedName>
        <fullName>Auxin-responsive protein IAA6</fullName>
    </recommendedName>
    <alternativeName>
        <fullName>Indoleacetic acid-induced protein 6</fullName>
    </alternativeName>
</protein>
<reference key="1">
    <citation type="journal article" date="2002" name="Nature">
        <title>The genome sequence and structure of rice chromosome 1.</title>
        <authorList>
            <person name="Sasaki T."/>
            <person name="Matsumoto T."/>
            <person name="Yamamoto K."/>
            <person name="Sakata K."/>
            <person name="Baba T."/>
            <person name="Katayose Y."/>
            <person name="Wu J."/>
            <person name="Niimura Y."/>
            <person name="Cheng Z."/>
            <person name="Nagamura Y."/>
            <person name="Antonio B.A."/>
            <person name="Kanamori H."/>
            <person name="Hosokawa S."/>
            <person name="Masukawa M."/>
            <person name="Arikawa K."/>
            <person name="Chiden Y."/>
            <person name="Hayashi M."/>
            <person name="Okamoto M."/>
            <person name="Ando T."/>
            <person name="Aoki H."/>
            <person name="Arita K."/>
            <person name="Hamada M."/>
            <person name="Harada C."/>
            <person name="Hijishita S."/>
            <person name="Honda M."/>
            <person name="Ichikawa Y."/>
            <person name="Idonuma A."/>
            <person name="Iijima M."/>
            <person name="Ikeda M."/>
            <person name="Ikeno M."/>
            <person name="Ito S."/>
            <person name="Ito T."/>
            <person name="Ito Y."/>
            <person name="Ito Y."/>
            <person name="Iwabuchi A."/>
            <person name="Kamiya K."/>
            <person name="Karasawa W."/>
            <person name="Katagiri S."/>
            <person name="Kikuta A."/>
            <person name="Kobayashi N."/>
            <person name="Kono I."/>
            <person name="Machita K."/>
            <person name="Maehara T."/>
            <person name="Mizuno H."/>
            <person name="Mizubayashi T."/>
            <person name="Mukai Y."/>
            <person name="Nagasaki H."/>
            <person name="Nakashima M."/>
            <person name="Nakama Y."/>
            <person name="Nakamichi Y."/>
            <person name="Nakamura M."/>
            <person name="Namiki N."/>
            <person name="Negishi M."/>
            <person name="Ohta I."/>
            <person name="Ono N."/>
            <person name="Saji S."/>
            <person name="Sakai K."/>
            <person name="Shibata M."/>
            <person name="Shimokawa T."/>
            <person name="Shomura A."/>
            <person name="Song J."/>
            <person name="Takazaki Y."/>
            <person name="Terasawa K."/>
            <person name="Tsuji K."/>
            <person name="Waki K."/>
            <person name="Yamagata H."/>
            <person name="Yamane H."/>
            <person name="Yoshiki S."/>
            <person name="Yoshihara R."/>
            <person name="Yukawa K."/>
            <person name="Zhong H."/>
            <person name="Iwama H."/>
            <person name="Endo T."/>
            <person name="Ito H."/>
            <person name="Hahn J.H."/>
            <person name="Kim H.-I."/>
            <person name="Eun M.-Y."/>
            <person name="Yano M."/>
            <person name="Jiang J."/>
            <person name="Gojobori T."/>
        </authorList>
    </citation>
    <scope>NUCLEOTIDE SEQUENCE [LARGE SCALE GENOMIC DNA]</scope>
    <source>
        <strain>cv. Nipponbare</strain>
    </source>
</reference>
<reference key="2">
    <citation type="journal article" date="2005" name="Nature">
        <title>The map-based sequence of the rice genome.</title>
        <authorList>
            <consortium name="International rice genome sequencing project (IRGSP)"/>
        </authorList>
    </citation>
    <scope>NUCLEOTIDE SEQUENCE [LARGE SCALE GENOMIC DNA]</scope>
    <source>
        <strain>cv. Nipponbare</strain>
    </source>
</reference>
<reference key="3">
    <citation type="journal article" date="2008" name="Nucleic Acids Res.">
        <title>The rice annotation project database (RAP-DB): 2008 update.</title>
        <authorList>
            <consortium name="The rice annotation project (RAP)"/>
        </authorList>
    </citation>
    <scope>GENOME REANNOTATION</scope>
    <source>
        <strain>cv. Nipponbare</strain>
    </source>
</reference>
<reference key="4">
    <citation type="journal article" date="2013" name="Rice">
        <title>Improvement of the Oryza sativa Nipponbare reference genome using next generation sequence and optical map data.</title>
        <authorList>
            <person name="Kawahara Y."/>
            <person name="de la Bastide M."/>
            <person name="Hamilton J.P."/>
            <person name="Kanamori H."/>
            <person name="McCombie W.R."/>
            <person name="Ouyang S."/>
            <person name="Schwartz D.C."/>
            <person name="Tanaka T."/>
            <person name="Wu J."/>
            <person name="Zhou S."/>
            <person name="Childs K.L."/>
            <person name="Davidson R.M."/>
            <person name="Lin H."/>
            <person name="Quesada-Ocampo L."/>
            <person name="Vaillancourt B."/>
            <person name="Sakai H."/>
            <person name="Lee S.S."/>
            <person name="Kim J."/>
            <person name="Numa H."/>
            <person name="Itoh T."/>
            <person name="Buell C.R."/>
            <person name="Matsumoto T."/>
        </authorList>
    </citation>
    <scope>GENOME REANNOTATION</scope>
    <source>
        <strain>cv. Nipponbare</strain>
    </source>
</reference>
<reference key="5">
    <citation type="journal article" date="2005" name="PLoS Biol.">
        <title>The genomes of Oryza sativa: a history of duplications.</title>
        <authorList>
            <person name="Yu J."/>
            <person name="Wang J."/>
            <person name="Lin W."/>
            <person name="Li S."/>
            <person name="Li H."/>
            <person name="Zhou J."/>
            <person name="Ni P."/>
            <person name="Dong W."/>
            <person name="Hu S."/>
            <person name="Zeng C."/>
            <person name="Zhang J."/>
            <person name="Zhang Y."/>
            <person name="Li R."/>
            <person name="Xu Z."/>
            <person name="Li S."/>
            <person name="Li X."/>
            <person name="Zheng H."/>
            <person name="Cong L."/>
            <person name="Lin L."/>
            <person name="Yin J."/>
            <person name="Geng J."/>
            <person name="Li G."/>
            <person name="Shi J."/>
            <person name="Liu J."/>
            <person name="Lv H."/>
            <person name="Li J."/>
            <person name="Wang J."/>
            <person name="Deng Y."/>
            <person name="Ran L."/>
            <person name="Shi X."/>
            <person name="Wang X."/>
            <person name="Wu Q."/>
            <person name="Li C."/>
            <person name="Ren X."/>
            <person name="Wang J."/>
            <person name="Wang X."/>
            <person name="Li D."/>
            <person name="Liu D."/>
            <person name="Zhang X."/>
            <person name="Ji Z."/>
            <person name="Zhao W."/>
            <person name="Sun Y."/>
            <person name="Zhang Z."/>
            <person name="Bao J."/>
            <person name="Han Y."/>
            <person name="Dong L."/>
            <person name="Ji J."/>
            <person name="Chen P."/>
            <person name="Wu S."/>
            <person name="Liu J."/>
            <person name="Xiao Y."/>
            <person name="Bu D."/>
            <person name="Tan J."/>
            <person name="Yang L."/>
            <person name="Ye C."/>
            <person name="Zhang J."/>
            <person name="Xu J."/>
            <person name="Zhou Y."/>
            <person name="Yu Y."/>
            <person name="Zhang B."/>
            <person name="Zhuang S."/>
            <person name="Wei H."/>
            <person name="Liu B."/>
            <person name="Lei M."/>
            <person name="Yu H."/>
            <person name="Li Y."/>
            <person name="Xu H."/>
            <person name="Wei S."/>
            <person name="He X."/>
            <person name="Fang L."/>
            <person name="Zhang Z."/>
            <person name="Zhang Y."/>
            <person name="Huang X."/>
            <person name="Su Z."/>
            <person name="Tong W."/>
            <person name="Li J."/>
            <person name="Tong Z."/>
            <person name="Li S."/>
            <person name="Ye J."/>
            <person name="Wang L."/>
            <person name="Fang L."/>
            <person name="Lei T."/>
            <person name="Chen C.-S."/>
            <person name="Chen H.-C."/>
            <person name="Xu Z."/>
            <person name="Li H."/>
            <person name="Huang H."/>
            <person name="Zhang F."/>
            <person name="Xu H."/>
            <person name="Li N."/>
            <person name="Zhao C."/>
            <person name="Li S."/>
            <person name="Dong L."/>
            <person name="Huang Y."/>
            <person name="Li L."/>
            <person name="Xi Y."/>
            <person name="Qi Q."/>
            <person name="Li W."/>
            <person name="Zhang B."/>
            <person name="Hu W."/>
            <person name="Zhang Y."/>
            <person name="Tian X."/>
            <person name="Jiao Y."/>
            <person name="Liang X."/>
            <person name="Jin J."/>
            <person name="Gao L."/>
            <person name="Zheng W."/>
            <person name="Hao B."/>
            <person name="Liu S.-M."/>
            <person name="Wang W."/>
            <person name="Yuan L."/>
            <person name="Cao M."/>
            <person name="McDermott J."/>
            <person name="Samudrala R."/>
            <person name="Wang J."/>
            <person name="Wong G.K.-S."/>
            <person name="Yang H."/>
        </authorList>
    </citation>
    <scope>NUCLEOTIDE SEQUENCE [LARGE SCALE GENOMIC DNA]</scope>
    <source>
        <strain>cv. Nipponbare</strain>
    </source>
</reference>
<reference key="6">
    <citation type="journal article" date="2003" name="Science">
        <title>Collection, mapping, and annotation of over 28,000 cDNA clones from japonica rice.</title>
        <authorList>
            <consortium name="The rice full-length cDNA consortium"/>
        </authorList>
    </citation>
    <scope>NUCLEOTIDE SEQUENCE [LARGE SCALE MRNA]</scope>
    <source>
        <strain>cv. Nipponbare</strain>
    </source>
</reference>
<reference key="7">
    <citation type="journal article" date="2006" name="Funct. Integr. Genomics">
        <title>Structure and expression analysis of early auxin-responsive Aux/IAA gene family in rice (Oryza sativa).</title>
        <authorList>
            <person name="Jain M."/>
            <person name="Kaur N."/>
            <person name="Garg R."/>
            <person name="Thakur J.K."/>
            <person name="Tyagi A.K."/>
            <person name="Khurana J.P."/>
        </authorList>
    </citation>
    <scope>TISSUE SPECIFICITY</scope>
    <scope>INDUCTION</scope>
    <scope>NOMENCLATURE</scope>
</reference>
<proteinExistence type="evidence at transcript level"/>
<dbReference type="EMBL" id="AP003768">
    <property type="protein sequence ID" value="BAB91924.1"/>
    <property type="molecule type" value="Genomic_DNA"/>
</dbReference>
<dbReference type="EMBL" id="AP008207">
    <property type="protein sequence ID" value="BAF06122.1"/>
    <property type="molecule type" value="Genomic_DNA"/>
</dbReference>
<dbReference type="EMBL" id="AP014957">
    <property type="protein sequence ID" value="BAS74279.1"/>
    <property type="molecule type" value="Genomic_DNA"/>
</dbReference>
<dbReference type="EMBL" id="CM000138">
    <property type="protein sequence ID" value="EAZ13489.1"/>
    <property type="molecule type" value="Genomic_DNA"/>
</dbReference>
<dbReference type="EMBL" id="AK068600">
    <property type="status" value="NOT_ANNOTATED_CDS"/>
    <property type="molecule type" value="mRNA"/>
</dbReference>
<dbReference type="RefSeq" id="XP_015619920.1">
    <property type="nucleotide sequence ID" value="XM_015764434.1"/>
</dbReference>
<dbReference type="SMR" id="Q8LQ74"/>
<dbReference type="FunCoup" id="Q8LQ74">
    <property type="interactions" value="334"/>
</dbReference>
<dbReference type="STRING" id="39947.Q8LQ74"/>
<dbReference type="PaxDb" id="39947-Q8LQ74"/>
<dbReference type="DNASU" id="4326541"/>
<dbReference type="EnsemblPlants" id="Os01t0741900-01">
    <property type="protein sequence ID" value="Os01t0741900-01"/>
    <property type="gene ID" value="Os01g0741900"/>
</dbReference>
<dbReference type="Gramene" id="Os01t0741900-01">
    <property type="protein sequence ID" value="Os01t0741900-01"/>
    <property type="gene ID" value="Os01g0741900"/>
</dbReference>
<dbReference type="KEGG" id="dosa:Os01g0741900"/>
<dbReference type="eggNOG" id="ENOG502QPYY">
    <property type="taxonomic scope" value="Eukaryota"/>
</dbReference>
<dbReference type="HOGENOM" id="CLU_049393_2_0_1"/>
<dbReference type="InParanoid" id="Q8LQ74"/>
<dbReference type="OMA" id="MGDSEGR"/>
<dbReference type="OrthoDB" id="615826at2759"/>
<dbReference type="PlantReactome" id="R-OSA-9030680">
    <property type="pathway name" value="Crown root development"/>
</dbReference>
<dbReference type="Proteomes" id="UP000000763">
    <property type="component" value="Chromosome 1"/>
</dbReference>
<dbReference type="Proteomes" id="UP000007752">
    <property type="component" value="Chromosome 1"/>
</dbReference>
<dbReference type="Proteomes" id="UP000059680">
    <property type="component" value="Chromosome 1"/>
</dbReference>
<dbReference type="GO" id="GO:0005634">
    <property type="term" value="C:nucleus"/>
    <property type="evidence" value="ECO:0007669"/>
    <property type="project" value="UniProtKB-SubCell"/>
</dbReference>
<dbReference type="GO" id="GO:0009734">
    <property type="term" value="P:auxin-activated signaling pathway"/>
    <property type="evidence" value="ECO:0007669"/>
    <property type="project" value="UniProtKB-KW"/>
</dbReference>
<dbReference type="GO" id="GO:0006355">
    <property type="term" value="P:regulation of DNA-templated transcription"/>
    <property type="evidence" value="ECO:0007669"/>
    <property type="project" value="InterPro"/>
</dbReference>
<dbReference type="GO" id="GO:0006417">
    <property type="term" value="P:regulation of translation"/>
    <property type="evidence" value="ECO:0000250"/>
    <property type="project" value="Gramene"/>
</dbReference>
<dbReference type="GO" id="GO:0009733">
    <property type="term" value="P:response to auxin"/>
    <property type="evidence" value="ECO:0000305"/>
    <property type="project" value="Gramene"/>
</dbReference>
<dbReference type="FunFam" id="3.10.20.90:FF:000225">
    <property type="entry name" value="Auxin-responsive protein"/>
    <property type="match status" value="1"/>
</dbReference>
<dbReference type="Gene3D" id="3.10.20.90">
    <property type="entry name" value="Phosphatidylinositol 3-kinase Catalytic Subunit, Chain A, domain 1"/>
    <property type="match status" value="1"/>
</dbReference>
<dbReference type="InterPro" id="IPR033389">
    <property type="entry name" value="AUX/IAA_dom"/>
</dbReference>
<dbReference type="InterPro" id="IPR003311">
    <property type="entry name" value="AUX_IAA"/>
</dbReference>
<dbReference type="InterPro" id="IPR053793">
    <property type="entry name" value="PB1-like"/>
</dbReference>
<dbReference type="PANTHER" id="PTHR31734">
    <property type="entry name" value="AUXIN-RESPONSIVE PROTEIN IAA17"/>
    <property type="match status" value="1"/>
</dbReference>
<dbReference type="PANTHER" id="PTHR31734:SF2">
    <property type="entry name" value="AUXIN-RESPONSIVE PROTEIN IAA26"/>
    <property type="match status" value="1"/>
</dbReference>
<dbReference type="Pfam" id="PF02309">
    <property type="entry name" value="AUX_IAA"/>
    <property type="match status" value="1"/>
</dbReference>
<dbReference type="SUPFAM" id="SSF54277">
    <property type="entry name" value="CAD &amp; PB1 domains"/>
    <property type="match status" value="1"/>
</dbReference>
<dbReference type="PROSITE" id="PS51745">
    <property type="entry name" value="PB1"/>
    <property type="match status" value="1"/>
</dbReference>
<keyword id="KW-0927">Auxin signaling pathway</keyword>
<keyword id="KW-0539">Nucleus</keyword>
<keyword id="KW-1185">Reference proteome</keyword>
<keyword id="KW-0678">Repressor</keyword>
<keyword id="KW-0804">Transcription</keyword>
<keyword id="KW-0805">Transcription regulation</keyword>
<comment type="function">
    <text evidence="1">Aux/IAA proteins are short-lived transcriptional factors that function as repressors of early auxin response genes at low auxin concentrations.</text>
</comment>
<comment type="subunit">
    <text evidence="1">Homodimers and heterodimers.</text>
</comment>
<comment type="subcellular location">
    <subcellularLocation>
        <location evidence="1">Nucleus</location>
    </subcellularLocation>
</comment>
<comment type="tissue specificity">
    <text evidence="4">Highly expressed in roots. Expressed in shoots and flowers.</text>
</comment>
<comment type="induction">
    <text evidence="4">Not induced by auxin.</text>
</comment>
<comment type="similarity">
    <text evidence="5">Belongs to the Aux/IAA family.</text>
</comment>
<name>IAA6_ORYSJ</name>
<organism>
    <name type="scientific">Oryza sativa subsp. japonica</name>
    <name type="common">Rice</name>
    <dbReference type="NCBI Taxonomy" id="39947"/>
    <lineage>
        <taxon>Eukaryota</taxon>
        <taxon>Viridiplantae</taxon>
        <taxon>Streptophyta</taxon>
        <taxon>Embryophyta</taxon>
        <taxon>Tracheophyta</taxon>
        <taxon>Spermatophyta</taxon>
        <taxon>Magnoliopsida</taxon>
        <taxon>Liliopsida</taxon>
        <taxon>Poales</taxon>
        <taxon>Poaceae</taxon>
        <taxon>BOP clade</taxon>
        <taxon>Oryzoideae</taxon>
        <taxon>Oryzeae</taxon>
        <taxon>Oryzinae</taxon>
        <taxon>Oryza</taxon>
        <taxon>Oryza sativa</taxon>
    </lineage>
</organism>
<evidence type="ECO:0000250" key="1"/>
<evidence type="ECO:0000255" key="2">
    <source>
        <dbReference type="PROSITE-ProRule" id="PRU01081"/>
    </source>
</evidence>
<evidence type="ECO:0000256" key="3">
    <source>
        <dbReference type="SAM" id="MobiDB-lite"/>
    </source>
</evidence>
<evidence type="ECO:0000269" key="4">
    <source>
    </source>
</evidence>
<evidence type="ECO:0000305" key="5"/>
<evidence type="ECO:0000312" key="6">
    <source>
        <dbReference type="EMBL" id="BAF06122.1"/>
    </source>
</evidence>
<evidence type="ECO:0000312" key="7">
    <source>
        <dbReference type="EMBL" id="EAZ13489.1"/>
    </source>
</evidence>
<gene>
    <name type="primary">IAA6</name>
    <name evidence="6" type="ordered locus">Os01g0741900</name>
    <name evidence="5" type="ordered locus">LOC_Os01g53880</name>
    <name evidence="7" type="ORF">OsJ_03405</name>
    <name type="ORF">P0439E07.11</name>
</gene>
<sequence length="335" mass="36706">MEEGSNKREGLPPQLLDLIPDEKEWKLREALGLGRSRNAGFDGEEDKKLDLKLGLPGFIEDDEAETLRDYRLQQESPSLSLSFFPKHSKTTSSTTTTTGAKRGFIDTVEDKTEGYNDQKQQARAGCGKELAVEEMIAAVSERKKGCCPPPPPPHGAPATPARNRPQTQGRGAAAPVVGWPPIRSFRRNLASSSSSKHSPEPQNDNANAKVTLTCKKNPLVKINMDGIPIGRKIDLAAYNSYDGLSSAVKQLFHGFLQAQKDQTNAQIAQQGADDKIFYQLLDGSGEYTLVYEDSEGDRMLVGDVPWKVFVSTAKRLRVLRSSELSHTLIGATARV</sequence>
<feature type="chain" id="PRO_0000223205" description="Auxin-responsive protein IAA6">
    <location>
        <begin position="1"/>
        <end position="335"/>
    </location>
</feature>
<feature type="domain" description="PB1" evidence="2">
    <location>
        <begin position="217"/>
        <end position="321"/>
    </location>
</feature>
<feature type="region of interest" description="Disordered" evidence="3">
    <location>
        <begin position="81"/>
        <end position="102"/>
    </location>
</feature>
<feature type="region of interest" description="Disordered" evidence="3">
    <location>
        <begin position="143"/>
        <end position="180"/>
    </location>
</feature>
<feature type="region of interest" description="Disordered" evidence="3">
    <location>
        <begin position="188"/>
        <end position="207"/>
    </location>
</feature>
<feature type="short sequence motif" description="EAR-like (transcriptional repression)" evidence="1">
    <location>
        <begin position="51"/>
        <end position="55"/>
    </location>
</feature>
<feature type="sequence conflict" description="In Ref. 6; AK068600." evidence="5" ref="6">
    <original>L</original>
    <variation>P</variation>
    <location>
        <position position="251"/>
    </location>
</feature>